<protein>
    <recommendedName>
        <fullName>C-C chemokine receptor type 5</fullName>
        <shortName>C-C CKR-5</shortName>
        <shortName>CC-CKR-5</shortName>
        <shortName>CCR-5</shortName>
        <shortName>CCR5</shortName>
    </recommendedName>
    <cdAntigenName>CD195</cdAntigenName>
</protein>
<gene>
    <name type="primary">CCR5</name>
    <name type="synonym">CMKBR5</name>
</gene>
<evidence type="ECO:0000250" key="1">
    <source>
        <dbReference type="UniProtKB" id="P51681"/>
    </source>
</evidence>
<evidence type="ECO:0000250" key="2">
    <source>
        <dbReference type="UniProtKB" id="Q9XT76"/>
    </source>
</evidence>
<evidence type="ECO:0000255" key="3"/>
<evidence type="ECO:0000255" key="4">
    <source>
        <dbReference type="PROSITE-ProRule" id="PRU00521"/>
    </source>
</evidence>
<accession>Q8HZT9</accession>
<organism>
    <name type="scientific">Saimiri sciureus</name>
    <name type="common">Common squirrel monkey</name>
    <dbReference type="NCBI Taxonomy" id="9521"/>
    <lineage>
        <taxon>Eukaryota</taxon>
        <taxon>Metazoa</taxon>
        <taxon>Chordata</taxon>
        <taxon>Craniata</taxon>
        <taxon>Vertebrata</taxon>
        <taxon>Euteleostomi</taxon>
        <taxon>Mammalia</taxon>
        <taxon>Eutheria</taxon>
        <taxon>Euarchontoglires</taxon>
        <taxon>Primates</taxon>
        <taxon>Haplorrhini</taxon>
        <taxon>Platyrrhini</taxon>
        <taxon>Cebidae</taxon>
        <taxon>Saimiriinae</taxon>
        <taxon>Saimiri</taxon>
    </lineage>
</organism>
<feature type="chain" id="PRO_0000253618" description="C-C chemokine receptor type 5">
    <location>
        <begin position="1"/>
        <end position="352"/>
    </location>
</feature>
<feature type="topological domain" description="Extracellular" evidence="3">
    <location>
        <begin position="1"/>
        <end position="30"/>
    </location>
</feature>
<feature type="transmembrane region" description="Helical; Name=1" evidence="3">
    <location>
        <begin position="31"/>
        <end position="58"/>
    </location>
</feature>
<feature type="topological domain" description="Cytoplasmic" evidence="3">
    <location>
        <begin position="59"/>
        <end position="68"/>
    </location>
</feature>
<feature type="transmembrane region" description="Helical; Name=2" evidence="3">
    <location>
        <begin position="69"/>
        <end position="89"/>
    </location>
</feature>
<feature type="topological domain" description="Extracellular" evidence="3">
    <location>
        <begin position="90"/>
        <end position="102"/>
    </location>
</feature>
<feature type="transmembrane region" description="Helical; Name=3" evidence="3">
    <location>
        <begin position="103"/>
        <end position="124"/>
    </location>
</feature>
<feature type="topological domain" description="Cytoplasmic" evidence="3">
    <location>
        <begin position="125"/>
        <end position="141"/>
    </location>
</feature>
<feature type="transmembrane region" description="Helical; Name=4" evidence="3">
    <location>
        <begin position="142"/>
        <end position="166"/>
    </location>
</feature>
<feature type="topological domain" description="Extracellular" evidence="3">
    <location>
        <begin position="167"/>
        <end position="198"/>
    </location>
</feature>
<feature type="transmembrane region" description="Helical; Name=5" evidence="3">
    <location>
        <begin position="199"/>
        <end position="218"/>
    </location>
</feature>
<feature type="topological domain" description="Cytoplasmic" evidence="3">
    <location>
        <begin position="219"/>
        <end position="235"/>
    </location>
</feature>
<feature type="transmembrane region" description="Helical; Name=6" evidence="3">
    <location>
        <begin position="236"/>
        <end position="260"/>
    </location>
</feature>
<feature type="topological domain" description="Extracellular" evidence="3">
    <location>
        <begin position="261"/>
        <end position="277"/>
    </location>
</feature>
<feature type="transmembrane region" description="Helical; Name=7" evidence="3">
    <location>
        <begin position="278"/>
        <end position="301"/>
    </location>
</feature>
<feature type="topological domain" description="Cytoplasmic" evidence="3">
    <location>
        <begin position="302"/>
        <end position="352"/>
    </location>
</feature>
<feature type="modified residue" description="Sulfotyrosine" evidence="1">
    <location>
        <position position="3"/>
    </location>
</feature>
<feature type="modified residue" description="Sulfotyrosine" evidence="3">
    <location>
        <position position="10"/>
    </location>
</feature>
<feature type="modified residue" description="Sulfotyrosine" evidence="3">
    <location>
        <position position="14"/>
    </location>
</feature>
<feature type="modified residue" description="Phosphoserine; by BARK1" evidence="1">
    <location>
        <position position="337"/>
    </location>
</feature>
<feature type="modified residue" description="Phosphoserine; by BARK1" evidence="1">
    <location>
        <position position="342"/>
    </location>
</feature>
<feature type="modified residue" description="Phosphoserine; by BARK1" evidence="1">
    <location>
        <position position="349"/>
    </location>
</feature>
<feature type="lipid moiety-binding region" description="S-palmitoyl cysteine" evidence="1">
    <location>
        <position position="321"/>
    </location>
</feature>
<feature type="lipid moiety-binding region" description="S-palmitoyl cysteine" evidence="1">
    <location>
        <position position="323"/>
    </location>
</feature>
<feature type="lipid moiety-binding region" description="S-palmitoyl cysteine" evidence="1">
    <location>
        <position position="324"/>
    </location>
</feature>
<feature type="glycosylation site" description="O-linked (GalNAc...) serine" evidence="1">
    <location>
        <position position="6"/>
    </location>
</feature>
<feature type="glycosylation site" description="O-linked (GalNAc...) serine" evidence="1">
    <location>
        <position position="7"/>
    </location>
</feature>
<feature type="disulfide bond" evidence="1">
    <location>
        <begin position="20"/>
        <end position="269"/>
    </location>
</feature>
<feature type="disulfide bond" evidence="4">
    <location>
        <begin position="101"/>
        <end position="178"/>
    </location>
</feature>
<comment type="function">
    <text evidence="1">Receptor for a number of inflammatory CC-chemokines including CCL3/MIP-1-alpha, CCL4/MIP-1-beta and RANTES and subsequently transduces a signal by increasing the intracellular calcium ion level. May play a role in the control of granulocytic lineage proliferation or differentiation. Participates in T-lymphocyte migration to the infection site by acting as a chemotactic receptor.</text>
</comment>
<comment type="subunit">
    <text evidence="1">Interacts with PRAF2. Efficient ligand binding to CCL3/MIP-1alpha and CCL4/MIP-1beta requires sulfation, O-glycosylation and sialic acid modifications. Glycosylation on Ser-6 is required for efficient binding of CCL4. Interacts with GRK2. Interacts with ARRB1 and ARRB2. Interacts with CNIH4. Interacts with S100A4; this interaction stimulates T-lymphocyte chemotaxis.</text>
</comment>
<comment type="subcellular location">
    <subcellularLocation>
        <location evidence="2">Cell membrane</location>
        <topology evidence="2">Multi-pass membrane protein</topology>
    </subcellularLocation>
</comment>
<comment type="PTM">
    <text evidence="1">Sulfated on at least 2 of the N-terminal tyrosines. Sulfation is required for efficient binding of the chemokines, CCL3 and CCL4 (By similarity).</text>
</comment>
<comment type="PTM">
    <text evidence="1">Palmitoylation in the C-terminal is important for cell surface expression.</text>
</comment>
<comment type="PTM">
    <text evidence="1">Phosphorylation on serine residues in the C-terminal is stimulated by binding CC chemokines especially by APO-RANTES.</text>
</comment>
<comment type="PTM">
    <text evidence="1">O-glycosylated, but not N-glycosylated. Ser-6 appears to be the major site even if Ser-7 may be also O-glycosylated. Also sialylated glycans present which contribute to chemokine binding. Ser-17 may also be glycosylated and, if so, with small moieties such as a T-antigen.</text>
</comment>
<comment type="similarity">
    <text evidence="4">Belongs to the G-protein coupled receptor 1 family.</text>
</comment>
<reference key="1">
    <citation type="journal article" date="2002" name="J. Exp. Med.">
        <title>Blockade of HIV-1 infection of New World monkey cells occurs primarily at the stage of virus entry.</title>
        <authorList>
            <person name="LaBonte J.A."/>
            <person name="Babcock G.J."/>
            <person name="Patel T."/>
            <person name="Sodroski J."/>
        </authorList>
    </citation>
    <scope>NUCLEOTIDE SEQUENCE [MRNA]</scope>
</reference>
<reference key="2">
    <citation type="journal article" date="2005" name="Infect. Genet. Evol.">
        <title>CCR5 chemokine receptor gene evolution in New World monkeys (Platyrrhini, Primates): implication on resistance to lentiviruses.</title>
        <authorList>
            <person name="Ribeiro I.P."/>
            <person name="Schrago C.G."/>
            <person name="Soares E.A.J.M."/>
            <person name="Pissinatti A."/>
            <person name="Seuanez H.N."/>
            <person name="Russo C.A.M."/>
            <person name="Tanuri A."/>
            <person name="Soares M.A."/>
        </authorList>
    </citation>
    <scope>NUCLEOTIDE SEQUENCE [GENOMIC DNA]</scope>
</reference>
<dbReference type="EMBL" id="AF452615">
    <property type="protein sequence ID" value="AAN14531.1"/>
    <property type="molecule type" value="mRNA"/>
</dbReference>
<dbReference type="EMBL" id="AY278742">
    <property type="protein sequence ID" value="AAQ20010.1"/>
    <property type="molecule type" value="Genomic_DNA"/>
</dbReference>
<dbReference type="SMR" id="Q8HZT9"/>
<dbReference type="GlyCosmos" id="Q8HZT9">
    <property type="glycosylation" value="2 sites, No reported glycans"/>
</dbReference>
<dbReference type="GO" id="GO:0005737">
    <property type="term" value="C:cytoplasm"/>
    <property type="evidence" value="ECO:0007669"/>
    <property type="project" value="TreeGrafter"/>
</dbReference>
<dbReference type="GO" id="GO:0009897">
    <property type="term" value="C:external side of plasma membrane"/>
    <property type="evidence" value="ECO:0000250"/>
    <property type="project" value="UniProtKB"/>
</dbReference>
<dbReference type="GO" id="GO:0016493">
    <property type="term" value="F:C-C chemokine receptor activity"/>
    <property type="evidence" value="ECO:0000250"/>
    <property type="project" value="UniProtKB"/>
</dbReference>
<dbReference type="GO" id="GO:0071791">
    <property type="term" value="F:chemokine (C-C motif) ligand 5 binding"/>
    <property type="evidence" value="ECO:0007669"/>
    <property type="project" value="TreeGrafter"/>
</dbReference>
<dbReference type="GO" id="GO:0019722">
    <property type="term" value="P:calcium-mediated signaling"/>
    <property type="evidence" value="ECO:0007669"/>
    <property type="project" value="TreeGrafter"/>
</dbReference>
<dbReference type="GO" id="GO:0060326">
    <property type="term" value="P:cell chemotaxis"/>
    <property type="evidence" value="ECO:0007669"/>
    <property type="project" value="TreeGrafter"/>
</dbReference>
<dbReference type="GO" id="GO:0006955">
    <property type="term" value="P:immune response"/>
    <property type="evidence" value="ECO:0007669"/>
    <property type="project" value="InterPro"/>
</dbReference>
<dbReference type="GO" id="GO:0006954">
    <property type="term" value="P:inflammatory response"/>
    <property type="evidence" value="ECO:0007669"/>
    <property type="project" value="InterPro"/>
</dbReference>
<dbReference type="GO" id="GO:0007204">
    <property type="term" value="P:positive regulation of cytosolic calcium ion concentration"/>
    <property type="evidence" value="ECO:0007669"/>
    <property type="project" value="TreeGrafter"/>
</dbReference>
<dbReference type="CDD" id="cd15184">
    <property type="entry name" value="7tmA_CCR5_CCR2"/>
    <property type="match status" value="1"/>
</dbReference>
<dbReference type="FunFam" id="1.20.1070.10:FF:000026">
    <property type="entry name" value="C-C chemokine receptor type 5"/>
    <property type="match status" value="1"/>
</dbReference>
<dbReference type="Gene3D" id="1.20.1070.10">
    <property type="entry name" value="Rhodopsin 7-helix transmembrane proteins"/>
    <property type="match status" value="1"/>
</dbReference>
<dbReference type="InterPro" id="IPR050119">
    <property type="entry name" value="CCR1-9-like"/>
</dbReference>
<dbReference type="InterPro" id="IPR002240">
    <property type="entry name" value="Chemokine_CCR5"/>
</dbReference>
<dbReference type="InterPro" id="IPR000355">
    <property type="entry name" value="Chemokine_rcpt"/>
</dbReference>
<dbReference type="InterPro" id="IPR000276">
    <property type="entry name" value="GPCR_Rhodpsn"/>
</dbReference>
<dbReference type="InterPro" id="IPR017452">
    <property type="entry name" value="GPCR_Rhodpsn_7TM"/>
</dbReference>
<dbReference type="PANTHER" id="PTHR10489:SF686">
    <property type="entry name" value="C-C CHEMOKINE RECEPTOR TYPE 5"/>
    <property type="match status" value="1"/>
</dbReference>
<dbReference type="PANTHER" id="PTHR10489">
    <property type="entry name" value="CELL ADHESION MOLECULE"/>
    <property type="match status" value="1"/>
</dbReference>
<dbReference type="Pfam" id="PF00001">
    <property type="entry name" value="7tm_1"/>
    <property type="match status" value="1"/>
</dbReference>
<dbReference type="PRINTS" id="PR00657">
    <property type="entry name" value="CCCHEMOKINER"/>
</dbReference>
<dbReference type="PRINTS" id="PR01110">
    <property type="entry name" value="CHEMOKINER5"/>
</dbReference>
<dbReference type="PRINTS" id="PR00237">
    <property type="entry name" value="GPCRRHODOPSN"/>
</dbReference>
<dbReference type="SMART" id="SM01381">
    <property type="entry name" value="7TM_GPCR_Srsx"/>
    <property type="match status" value="1"/>
</dbReference>
<dbReference type="SUPFAM" id="SSF81321">
    <property type="entry name" value="Family A G protein-coupled receptor-like"/>
    <property type="match status" value="1"/>
</dbReference>
<dbReference type="PROSITE" id="PS00237">
    <property type="entry name" value="G_PROTEIN_RECEP_F1_1"/>
    <property type="match status" value="1"/>
</dbReference>
<dbReference type="PROSITE" id="PS50262">
    <property type="entry name" value="G_PROTEIN_RECEP_F1_2"/>
    <property type="match status" value="1"/>
</dbReference>
<keyword id="KW-1003">Cell membrane</keyword>
<keyword id="KW-1015">Disulfide bond</keyword>
<keyword id="KW-0297">G-protein coupled receptor</keyword>
<keyword id="KW-0325">Glycoprotein</keyword>
<keyword id="KW-0449">Lipoprotein</keyword>
<keyword id="KW-0472">Membrane</keyword>
<keyword id="KW-0564">Palmitate</keyword>
<keyword id="KW-0597">Phosphoprotein</keyword>
<keyword id="KW-0675">Receptor</keyword>
<keyword id="KW-0765">Sulfation</keyword>
<keyword id="KW-0807">Transducer</keyword>
<keyword id="KW-0812">Transmembrane</keyword>
<keyword id="KW-1133">Transmembrane helix</keyword>
<proteinExistence type="evidence at transcript level"/>
<sequence length="352" mass="40542">MDYQVSSPIYDIDYGPSEPCRKIDVKQMGAQLLPPLYSLVFLFGFVGNMLVVLILINCKRLKSMTDIYLLNLAISDLLFLFTIPFWAHYAAGQWDFGNTMCQFLTALYFIGFFSGIFFIILLTIDRYLAIVHAVFALKARTVTFGVVTSVITWVVAVFASLPGIIFTRSQKEGYHYSCSPHFPFSQYRFWKNFETLKMVILGLVLPLLVMVICYSGILKTLLRCRNEKKRHRAVRLIFTIMIVYFLFWAPYNIVLLINTYPDFFGVNNCNSSNRLDQAMQVTETLGMTHCCVNPIIYAFVGEKFRNYLVIFFQKHIAKRFCKCCSIFQKEAPERANSVYTRSTGEQEISVGL</sequence>
<name>CCR5_SAISC</name>